<proteinExistence type="evidence at protein level"/>
<organism>
    <name type="scientific">Bacillus subtilis (strain 168)</name>
    <dbReference type="NCBI Taxonomy" id="224308"/>
    <lineage>
        <taxon>Bacteria</taxon>
        <taxon>Bacillati</taxon>
        <taxon>Bacillota</taxon>
        <taxon>Bacilli</taxon>
        <taxon>Bacillales</taxon>
        <taxon>Bacillaceae</taxon>
        <taxon>Bacillus</taxon>
    </lineage>
</organism>
<sequence>MSHRADEIRKRLEKRRKQLSGSKRFSTQTVSEKQKPPSWVMVTDQEKHGTLPVYEDNMPTFNGKHPLVKTDSIILKCLLSACLVLVSAIAYKTNIGPVSQIKPAVAKTFETEFQFASASHWFETKFGNPLAFLAPEHKNKEQQIEVGKDLIAPASGKVQQDFQDNGEGIKVETSSDKIDSVKEGYVVEVSKDSQTGLTVKVQHADNTYSIYGELKDVDVALYDFVDKGKKLGSIKLDDHNKGVYYFAMKDGDKFIDPIQVISFE</sequence>
<name>SP4FA_BACSU</name>
<keyword id="KW-0472">Membrane</keyword>
<keyword id="KW-1185">Reference proteome</keyword>
<keyword id="KW-0749">Sporulation</keyword>
<keyword id="KW-0812">Transmembrane</keyword>
<keyword id="KW-1133">Transmembrane helix</keyword>
<protein>
    <recommendedName>
        <fullName>Stage IV sporulation protein FA</fullName>
    </recommendedName>
</protein>
<evidence type="ECO:0000255" key="1"/>
<evidence type="ECO:0000256" key="2">
    <source>
        <dbReference type="SAM" id="MobiDB-lite"/>
    </source>
</evidence>
<evidence type="ECO:0000269" key="3">
    <source>
    </source>
</evidence>
<evidence type="ECO:0000305" key="4"/>
<reference key="1">
    <citation type="journal article" date="1991" name="J. Mol. Biol.">
        <title>Sporulation operon spoIVF and the characterization of mutations that uncouple mother-cell from forespore gene expression in Bacillus subtilis.</title>
        <authorList>
            <person name="Cutting S.M."/>
            <person name="Roels S."/>
            <person name="Losick R."/>
        </authorList>
    </citation>
    <scope>NUCLEOTIDE SEQUENCE [GENOMIC DNA]</scope>
    <source>
        <strain>168</strain>
    </source>
</reference>
<reference key="2">
    <citation type="journal article" date="1997" name="Nature">
        <title>The complete genome sequence of the Gram-positive bacterium Bacillus subtilis.</title>
        <authorList>
            <person name="Kunst F."/>
            <person name="Ogasawara N."/>
            <person name="Moszer I."/>
            <person name="Albertini A.M."/>
            <person name="Alloni G."/>
            <person name="Azevedo V."/>
            <person name="Bertero M.G."/>
            <person name="Bessieres P."/>
            <person name="Bolotin A."/>
            <person name="Borchert S."/>
            <person name="Borriss R."/>
            <person name="Boursier L."/>
            <person name="Brans A."/>
            <person name="Braun M."/>
            <person name="Brignell S.C."/>
            <person name="Bron S."/>
            <person name="Brouillet S."/>
            <person name="Bruschi C.V."/>
            <person name="Caldwell B."/>
            <person name="Capuano V."/>
            <person name="Carter N.M."/>
            <person name="Choi S.-K."/>
            <person name="Codani J.-J."/>
            <person name="Connerton I.F."/>
            <person name="Cummings N.J."/>
            <person name="Daniel R.A."/>
            <person name="Denizot F."/>
            <person name="Devine K.M."/>
            <person name="Duesterhoeft A."/>
            <person name="Ehrlich S.D."/>
            <person name="Emmerson P.T."/>
            <person name="Entian K.-D."/>
            <person name="Errington J."/>
            <person name="Fabret C."/>
            <person name="Ferrari E."/>
            <person name="Foulger D."/>
            <person name="Fritz C."/>
            <person name="Fujita M."/>
            <person name="Fujita Y."/>
            <person name="Fuma S."/>
            <person name="Galizzi A."/>
            <person name="Galleron N."/>
            <person name="Ghim S.-Y."/>
            <person name="Glaser P."/>
            <person name="Goffeau A."/>
            <person name="Golightly E.J."/>
            <person name="Grandi G."/>
            <person name="Guiseppi G."/>
            <person name="Guy B.J."/>
            <person name="Haga K."/>
            <person name="Haiech J."/>
            <person name="Harwood C.R."/>
            <person name="Henaut A."/>
            <person name="Hilbert H."/>
            <person name="Holsappel S."/>
            <person name="Hosono S."/>
            <person name="Hullo M.-F."/>
            <person name="Itaya M."/>
            <person name="Jones L.-M."/>
            <person name="Joris B."/>
            <person name="Karamata D."/>
            <person name="Kasahara Y."/>
            <person name="Klaerr-Blanchard M."/>
            <person name="Klein C."/>
            <person name="Kobayashi Y."/>
            <person name="Koetter P."/>
            <person name="Koningstein G."/>
            <person name="Krogh S."/>
            <person name="Kumano M."/>
            <person name="Kurita K."/>
            <person name="Lapidus A."/>
            <person name="Lardinois S."/>
            <person name="Lauber J."/>
            <person name="Lazarevic V."/>
            <person name="Lee S.-M."/>
            <person name="Levine A."/>
            <person name="Liu H."/>
            <person name="Masuda S."/>
            <person name="Mauel C."/>
            <person name="Medigue C."/>
            <person name="Medina N."/>
            <person name="Mellado R.P."/>
            <person name="Mizuno M."/>
            <person name="Moestl D."/>
            <person name="Nakai S."/>
            <person name="Noback M."/>
            <person name="Noone D."/>
            <person name="O'Reilly M."/>
            <person name="Ogawa K."/>
            <person name="Ogiwara A."/>
            <person name="Oudega B."/>
            <person name="Park S.-H."/>
            <person name="Parro V."/>
            <person name="Pohl T.M."/>
            <person name="Portetelle D."/>
            <person name="Porwollik S."/>
            <person name="Prescott A.M."/>
            <person name="Presecan E."/>
            <person name="Pujic P."/>
            <person name="Purnelle B."/>
            <person name="Rapoport G."/>
            <person name="Rey M."/>
            <person name="Reynolds S."/>
            <person name="Rieger M."/>
            <person name="Rivolta C."/>
            <person name="Rocha E."/>
            <person name="Roche B."/>
            <person name="Rose M."/>
            <person name="Sadaie Y."/>
            <person name="Sato T."/>
            <person name="Scanlan E."/>
            <person name="Schleich S."/>
            <person name="Schroeter R."/>
            <person name="Scoffone F."/>
            <person name="Sekiguchi J."/>
            <person name="Sekowska A."/>
            <person name="Seror S.J."/>
            <person name="Serror P."/>
            <person name="Shin B.-S."/>
            <person name="Soldo B."/>
            <person name="Sorokin A."/>
            <person name="Tacconi E."/>
            <person name="Takagi T."/>
            <person name="Takahashi H."/>
            <person name="Takemaru K."/>
            <person name="Takeuchi M."/>
            <person name="Tamakoshi A."/>
            <person name="Tanaka T."/>
            <person name="Terpstra P."/>
            <person name="Tognoni A."/>
            <person name="Tosato V."/>
            <person name="Uchiyama S."/>
            <person name="Vandenbol M."/>
            <person name="Vannier F."/>
            <person name="Vassarotti A."/>
            <person name="Viari A."/>
            <person name="Wambutt R."/>
            <person name="Wedler E."/>
            <person name="Wedler H."/>
            <person name="Weitzenegger T."/>
            <person name="Winters P."/>
            <person name="Wipat A."/>
            <person name="Yamamoto H."/>
            <person name="Yamane K."/>
            <person name="Yasumoto K."/>
            <person name="Yata K."/>
            <person name="Yoshida K."/>
            <person name="Yoshikawa H.-F."/>
            <person name="Zumstein E."/>
            <person name="Yoshikawa H."/>
            <person name="Danchin A."/>
        </authorList>
    </citation>
    <scope>NUCLEOTIDE SEQUENCE [LARGE SCALE GENOMIC DNA]</scope>
    <source>
        <strain>168</strain>
    </source>
</reference>
<reference key="3">
    <citation type="journal article" date="1993" name="Mol. Microbiol.">
        <title>The minCD locus of Bacillus subtilis lacks the minE determinant that provides topological specificity to cell division.</title>
        <authorList>
            <person name="Lee S."/>
            <person name="Price C.W."/>
        </authorList>
    </citation>
    <scope>NUCLEOTIDE SEQUENCE [GENOMIC DNA] OF 1-13</scope>
    <source>
        <strain>168</strain>
    </source>
</reference>
<reference key="4">
    <citation type="journal article" date="1999" name="J. Bacteriol.">
        <title>Role of the sporulation protein BofA in regulating activation of the Bacillus subtilis developmental transcription factor sigmaK.</title>
        <authorList>
            <person name="Resnekov O."/>
        </authorList>
    </citation>
    <scope>STABILIZATION BY BOFA</scope>
    <scope>POSSIBLE DEGRADATION BY FTSH</scope>
</reference>
<reference key="5">
    <citation type="journal article" date="2002" name="Genes Dev.">
        <title>A sporulation membrane protein tethers the pro-sigmaK processing enzyme to its inhibitor and dictates its subcellular localization.</title>
        <authorList>
            <person name="Rudner D.Z."/>
            <person name="Losick R."/>
        </authorList>
    </citation>
    <scope>SUBUNIT</scope>
</reference>
<dbReference type="EMBL" id="X59528">
    <property type="protein sequence ID" value="CAA42106.1"/>
    <property type="molecule type" value="Genomic_DNA"/>
</dbReference>
<dbReference type="EMBL" id="AL009126">
    <property type="protein sequence ID" value="CAB14758.1"/>
    <property type="molecule type" value="Genomic_DNA"/>
</dbReference>
<dbReference type="EMBL" id="Z15113">
    <property type="protein sequence ID" value="CAA78819.1"/>
    <property type="molecule type" value="Genomic_DNA"/>
</dbReference>
<dbReference type="PIR" id="S18437">
    <property type="entry name" value="S18437"/>
</dbReference>
<dbReference type="RefSeq" id="NP_390676.1">
    <property type="nucleotide sequence ID" value="NC_000964.3"/>
</dbReference>
<dbReference type="RefSeq" id="WP_004398684.1">
    <property type="nucleotide sequence ID" value="NZ_OZ025638.1"/>
</dbReference>
<dbReference type="SMR" id="P26936"/>
<dbReference type="FunCoup" id="P26936">
    <property type="interactions" value="52"/>
</dbReference>
<dbReference type="IntAct" id="P26936">
    <property type="interactions" value="3"/>
</dbReference>
<dbReference type="STRING" id="224308.BSU27980"/>
<dbReference type="PaxDb" id="224308-BSU27980"/>
<dbReference type="EnsemblBacteria" id="CAB14758">
    <property type="protein sequence ID" value="CAB14758"/>
    <property type="gene ID" value="BSU_27980"/>
</dbReference>
<dbReference type="GeneID" id="937501"/>
<dbReference type="KEGG" id="bsu:BSU27980"/>
<dbReference type="PATRIC" id="fig|224308.179.peg.3040"/>
<dbReference type="eggNOG" id="COG0739">
    <property type="taxonomic scope" value="Bacteria"/>
</dbReference>
<dbReference type="InParanoid" id="P26936"/>
<dbReference type="OrthoDB" id="2986589at2"/>
<dbReference type="BioCyc" id="BSUB:BSU27980-MONOMER"/>
<dbReference type="Proteomes" id="UP000001570">
    <property type="component" value="Chromosome"/>
</dbReference>
<dbReference type="GO" id="GO:0016020">
    <property type="term" value="C:membrane"/>
    <property type="evidence" value="ECO:0007669"/>
    <property type="project" value="UniProtKB-KW"/>
</dbReference>
<dbReference type="GO" id="GO:0004222">
    <property type="term" value="F:metalloendopeptidase activity"/>
    <property type="evidence" value="ECO:0000318"/>
    <property type="project" value="GO_Central"/>
</dbReference>
<dbReference type="GO" id="GO:0030435">
    <property type="term" value="P:sporulation resulting in formation of a cellular spore"/>
    <property type="evidence" value="ECO:0007669"/>
    <property type="project" value="UniProtKB-KW"/>
</dbReference>
<dbReference type="CDD" id="cd12797">
    <property type="entry name" value="M23_peptidase"/>
    <property type="match status" value="1"/>
</dbReference>
<dbReference type="Gene3D" id="2.70.70.10">
    <property type="entry name" value="Glucose Permease (Domain IIA)"/>
    <property type="match status" value="1"/>
</dbReference>
<dbReference type="InterPro" id="IPR011055">
    <property type="entry name" value="Dup_hybrid_motif"/>
</dbReference>
<dbReference type="InterPro" id="IPR016047">
    <property type="entry name" value="Peptidase_M23"/>
</dbReference>
<dbReference type="Pfam" id="PF01551">
    <property type="entry name" value="Peptidase_M23"/>
    <property type="match status" value="1"/>
</dbReference>
<dbReference type="SUPFAM" id="SSF51261">
    <property type="entry name" value="Duplicated hybrid motif"/>
    <property type="match status" value="1"/>
</dbReference>
<feature type="chain" id="PRO_0000072074" description="Stage IV sporulation protein FA">
    <location>
        <begin position="1"/>
        <end position="264"/>
    </location>
</feature>
<feature type="topological domain" description="Mother cell cytoplasmic">
    <location>
        <begin position="1"/>
        <end position="72"/>
    </location>
</feature>
<feature type="transmembrane region" description="Helical" evidence="1">
    <location>
        <begin position="73"/>
        <end position="90"/>
    </location>
</feature>
<feature type="topological domain" description="Forespore intermembrane space" evidence="4">
    <location>
        <begin position="91"/>
        <end position="264"/>
    </location>
</feature>
<feature type="region of interest" description="Disordered" evidence="2">
    <location>
        <begin position="1"/>
        <end position="37"/>
    </location>
</feature>
<feature type="compositionally biased region" description="Basic and acidic residues" evidence="2">
    <location>
        <begin position="1"/>
        <end position="10"/>
    </location>
</feature>
<feature type="compositionally biased region" description="Polar residues" evidence="2">
    <location>
        <begin position="19"/>
        <end position="31"/>
    </location>
</feature>
<comment type="function">
    <text>Implicated in the coupling of mother cell to forespore gene expression. Required for spore formation at 37 degrees Celsius, but not at 30 degrees Celsius. SpoIVFA plays a central role in both maintaining the SpoIVFA/BofA/SpoIVFB complex and anchoring it to the outer forespore membrane. SpoIVFA brings BofA into close proximity to SpoIVFB, allowing BofA to inhibit SpoIVFB. Increased accumulation of SpoIVFA seems to inhibit the activity of SpoIVFB and thus regulates the activation of sigma-K.</text>
</comment>
<comment type="subunit">
    <text evidence="3">Forms a complex with BofA and SpoIVFB localized in the mother-cell membrane surrounding the forespore.</text>
</comment>
<comment type="interaction">
    <interactant intactId="EBI-5254757">
        <id>P26936</id>
    </interactant>
    <interactant intactId="EBI-5246793">
        <id>O35002</id>
        <label>ctpB</label>
    </interactant>
    <organismsDiffer>false</organismsDiffer>
    <experiments>2</experiments>
</comment>
<comment type="subcellular location">
    <subcellularLocation>
        <location>Forespore outer membrane</location>
    </subcellularLocation>
</comment>
<comment type="developmental stage">
    <text>Transcribed during the stage II, but not required until stage IV of sporulation.</text>
</comment>
<comment type="PTM">
    <text>May be degraded by FtsH. It is stabilized by an ftsH disruption mutant, and in a probably independent fashion, by overexpression of BofA.</text>
</comment>
<gene>
    <name type="primary">spoIVFA</name>
    <name type="synonym">bofB</name>
    <name type="ordered locus">BSU27980</name>
</gene>
<accession>P26936</accession>